<name>ROBIN_MIMIV</name>
<keyword id="KW-1185">Reference proteome</keyword>
<dbReference type="EMBL" id="AY653733">
    <property type="protein sequence ID" value="AAV50689.1"/>
    <property type="molecule type" value="Genomic_DNA"/>
</dbReference>
<dbReference type="KEGG" id="vg:9925041"/>
<dbReference type="OrthoDB" id="22468at10239"/>
<dbReference type="Proteomes" id="UP000001134">
    <property type="component" value="Genome"/>
</dbReference>
<dbReference type="SUPFAM" id="SSF52047">
    <property type="entry name" value="RNI-like"/>
    <property type="match status" value="1"/>
</dbReference>
<gene>
    <name type="ordered locus">MIMI_R420</name>
</gene>
<comment type="miscellaneous">
    <text>Has been named in honor of Robin Offord, pioneer of proteomics, at the occasion of his retirement from the University of Geneva.</text>
</comment>
<organismHost>
    <name type="scientific">Acanthamoeba polyphaga</name>
    <name type="common">Amoeba</name>
    <dbReference type="NCBI Taxonomy" id="5757"/>
</organismHost>
<protein>
    <recommendedName>
        <fullName>Robin</fullName>
    </recommendedName>
</protein>
<proteinExistence type="predicted"/>
<feature type="chain" id="PRO_0000071279" description="Robin">
    <location>
        <begin position="1"/>
        <end position="244"/>
    </location>
</feature>
<accession>Q5UQM2</accession>
<reference key="1">
    <citation type="journal article" date="2004" name="Science">
        <title>The 1.2-megabase genome sequence of Mimivirus.</title>
        <authorList>
            <person name="Raoult D."/>
            <person name="Audic S."/>
            <person name="Robert C."/>
            <person name="Abergel C."/>
            <person name="Renesto P."/>
            <person name="Ogata H."/>
            <person name="La Scola B."/>
            <person name="Susan M."/>
            <person name="Claverie J.-M."/>
        </authorList>
    </citation>
    <scope>NUCLEOTIDE SEQUENCE [LARGE SCALE GENOMIC DNA]</scope>
    <source>
        <strain>Rowbotham-Bradford</strain>
    </source>
</reference>
<organism>
    <name type="scientific">Acanthamoeba polyphaga mimivirus</name>
    <name type="common">APMV</name>
    <dbReference type="NCBI Taxonomy" id="212035"/>
    <lineage>
        <taxon>Viruses</taxon>
        <taxon>Varidnaviria</taxon>
        <taxon>Bamfordvirae</taxon>
        <taxon>Nucleocytoviricota</taxon>
        <taxon>Megaviricetes</taxon>
        <taxon>Imitervirales</taxon>
        <taxon>Mimiviridae</taxon>
        <taxon>Megamimivirinae</taxon>
        <taxon>Mimivirus</taxon>
        <taxon>Mimivirus bradfordmassiliense</taxon>
    </lineage>
</organism>
<sequence length="244" mass="29433">MKHFTFADNYLRTYIDTVTFGFKFIVHPVNYTDLSISIMIGEQNLFNLVKLIPNVRKLHLYFTDENTKYNLESITKLTKLRVLVVFSQFEKKSRPRLYNIKSLNKLKLDSIVIYDKILDPFNPVYQWPQIRDRKFKLVKSIDIKGPIINYNVNRIRFHNHLFEKYPVCCSNFIVQLINQPDNTQIYQVIYRYQEQYIEDQIYIQTIDKSKFLRFIYGENVLNTEIYYPQCQQDLYIDDIDNNSN</sequence>